<evidence type="ECO:0000255" key="1">
    <source>
        <dbReference type="HAMAP-Rule" id="MF_02126"/>
    </source>
</evidence>
<comment type="function">
    <text evidence="1">Methylates the class 1 translation termination release factors RF1/PrfA and RF2/PrfB on the glutamine residue of the universally conserved GGQ motif.</text>
</comment>
<comment type="catalytic activity">
    <reaction evidence="1">
        <text>L-glutaminyl-[peptide chain release factor] + S-adenosyl-L-methionine = N(5)-methyl-L-glutaminyl-[peptide chain release factor] + S-adenosyl-L-homocysteine + H(+)</text>
        <dbReference type="Rhea" id="RHEA:42896"/>
        <dbReference type="Rhea" id="RHEA-COMP:10271"/>
        <dbReference type="Rhea" id="RHEA-COMP:10272"/>
        <dbReference type="ChEBI" id="CHEBI:15378"/>
        <dbReference type="ChEBI" id="CHEBI:30011"/>
        <dbReference type="ChEBI" id="CHEBI:57856"/>
        <dbReference type="ChEBI" id="CHEBI:59789"/>
        <dbReference type="ChEBI" id="CHEBI:61891"/>
        <dbReference type="EC" id="2.1.1.297"/>
    </reaction>
</comment>
<comment type="similarity">
    <text evidence="1">Belongs to the protein N5-glutamine methyltransferase family. PrmC subfamily.</text>
</comment>
<organism>
    <name type="scientific">Agrobacterium fabrum (strain C58 / ATCC 33970)</name>
    <name type="common">Agrobacterium tumefaciens (strain C58)</name>
    <dbReference type="NCBI Taxonomy" id="176299"/>
    <lineage>
        <taxon>Bacteria</taxon>
        <taxon>Pseudomonadati</taxon>
        <taxon>Pseudomonadota</taxon>
        <taxon>Alphaproteobacteria</taxon>
        <taxon>Hyphomicrobiales</taxon>
        <taxon>Rhizobiaceae</taxon>
        <taxon>Rhizobium/Agrobacterium group</taxon>
        <taxon>Agrobacterium</taxon>
        <taxon>Agrobacterium tumefaciens complex</taxon>
    </lineage>
</organism>
<keyword id="KW-0489">Methyltransferase</keyword>
<keyword id="KW-1185">Reference proteome</keyword>
<keyword id="KW-0949">S-adenosyl-L-methionine</keyword>
<keyword id="KW-0808">Transferase</keyword>
<reference key="1">
    <citation type="journal article" date="2001" name="Science">
        <title>The genome of the natural genetic engineer Agrobacterium tumefaciens C58.</title>
        <authorList>
            <person name="Wood D.W."/>
            <person name="Setubal J.C."/>
            <person name="Kaul R."/>
            <person name="Monks D.E."/>
            <person name="Kitajima J.P."/>
            <person name="Okura V.K."/>
            <person name="Zhou Y."/>
            <person name="Chen L."/>
            <person name="Wood G.E."/>
            <person name="Almeida N.F. Jr."/>
            <person name="Woo L."/>
            <person name="Chen Y."/>
            <person name="Paulsen I.T."/>
            <person name="Eisen J.A."/>
            <person name="Karp P.D."/>
            <person name="Bovee D. Sr."/>
            <person name="Chapman P."/>
            <person name="Clendenning J."/>
            <person name="Deatherage G."/>
            <person name="Gillet W."/>
            <person name="Grant C."/>
            <person name="Kutyavin T."/>
            <person name="Levy R."/>
            <person name="Li M.-J."/>
            <person name="McClelland E."/>
            <person name="Palmieri A."/>
            <person name="Raymond C."/>
            <person name="Rouse G."/>
            <person name="Saenphimmachak C."/>
            <person name="Wu Z."/>
            <person name="Romero P."/>
            <person name="Gordon D."/>
            <person name="Zhang S."/>
            <person name="Yoo H."/>
            <person name="Tao Y."/>
            <person name="Biddle P."/>
            <person name="Jung M."/>
            <person name="Krespan W."/>
            <person name="Perry M."/>
            <person name="Gordon-Kamm B."/>
            <person name="Liao L."/>
            <person name="Kim S."/>
            <person name="Hendrick C."/>
            <person name="Zhao Z.-Y."/>
            <person name="Dolan M."/>
            <person name="Chumley F."/>
            <person name="Tingey S.V."/>
            <person name="Tomb J.-F."/>
            <person name="Gordon M.P."/>
            <person name="Olson M.V."/>
            <person name="Nester E.W."/>
        </authorList>
    </citation>
    <scope>NUCLEOTIDE SEQUENCE [LARGE SCALE GENOMIC DNA]</scope>
    <source>
        <strain>C58 / ATCC 33970</strain>
    </source>
</reference>
<reference key="2">
    <citation type="journal article" date="2001" name="Science">
        <title>Genome sequence of the plant pathogen and biotechnology agent Agrobacterium tumefaciens C58.</title>
        <authorList>
            <person name="Goodner B."/>
            <person name="Hinkle G."/>
            <person name="Gattung S."/>
            <person name="Miller N."/>
            <person name="Blanchard M."/>
            <person name="Qurollo B."/>
            <person name="Goldman B.S."/>
            <person name="Cao Y."/>
            <person name="Askenazi M."/>
            <person name="Halling C."/>
            <person name="Mullin L."/>
            <person name="Houmiel K."/>
            <person name="Gordon J."/>
            <person name="Vaudin M."/>
            <person name="Iartchouk O."/>
            <person name="Epp A."/>
            <person name="Liu F."/>
            <person name="Wollam C."/>
            <person name="Allinger M."/>
            <person name="Doughty D."/>
            <person name="Scott C."/>
            <person name="Lappas C."/>
            <person name="Markelz B."/>
            <person name="Flanagan C."/>
            <person name="Crowell C."/>
            <person name="Gurson J."/>
            <person name="Lomo C."/>
            <person name="Sear C."/>
            <person name="Strub G."/>
            <person name="Cielo C."/>
            <person name="Slater S."/>
        </authorList>
    </citation>
    <scope>NUCLEOTIDE SEQUENCE [LARGE SCALE GENOMIC DNA]</scope>
    <source>
        <strain>C58 / ATCC 33970</strain>
    </source>
</reference>
<feature type="chain" id="PRO_0000414498" description="Release factor glutamine methyltransferase">
    <location>
        <begin position="1"/>
        <end position="289"/>
    </location>
</feature>
<feature type="binding site" evidence="1">
    <location>
        <begin position="130"/>
        <end position="134"/>
    </location>
    <ligand>
        <name>S-adenosyl-L-methionine</name>
        <dbReference type="ChEBI" id="CHEBI:59789"/>
    </ligand>
</feature>
<feature type="binding site" evidence="1">
    <location>
        <position position="153"/>
    </location>
    <ligand>
        <name>S-adenosyl-L-methionine</name>
        <dbReference type="ChEBI" id="CHEBI:59789"/>
    </ligand>
</feature>
<feature type="binding site" evidence="1">
    <location>
        <position position="182"/>
    </location>
    <ligand>
        <name>S-adenosyl-L-methionine</name>
        <dbReference type="ChEBI" id="CHEBI:59789"/>
    </ligand>
</feature>
<feature type="binding site" evidence="1">
    <location>
        <begin position="196"/>
        <end position="199"/>
    </location>
    <ligand>
        <name>substrate</name>
    </ligand>
</feature>
<feature type="binding site" evidence="1">
    <location>
        <position position="196"/>
    </location>
    <ligand>
        <name>S-adenosyl-L-methionine</name>
        <dbReference type="ChEBI" id="CHEBI:59789"/>
    </ligand>
</feature>
<gene>
    <name evidence="1" type="primary">prmC</name>
    <name type="synonym">hemK</name>
    <name type="ordered locus">Atu4175</name>
</gene>
<name>PRMC_AGRFC</name>
<accession>A9CG70</accession>
<dbReference type="EC" id="2.1.1.297" evidence="1"/>
<dbReference type="EMBL" id="AE007870">
    <property type="protein sequence ID" value="AAK89259.1"/>
    <property type="molecule type" value="Genomic_DNA"/>
</dbReference>
<dbReference type="PIR" id="A98217">
    <property type="entry name" value="A98217"/>
</dbReference>
<dbReference type="PIR" id="AI3069">
    <property type="entry name" value="AI3069"/>
</dbReference>
<dbReference type="RefSeq" id="NP_356474.1">
    <property type="nucleotide sequence ID" value="NC_003063.2"/>
</dbReference>
<dbReference type="RefSeq" id="WP_010973616.1">
    <property type="nucleotide sequence ID" value="NC_003063.2"/>
</dbReference>
<dbReference type="SMR" id="A9CG70"/>
<dbReference type="STRING" id="176299.Atu4175"/>
<dbReference type="EnsemblBacteria" id="AAK89259">
    <property type="protein sequence ID" value="AAK89259"/>
    <property type="gene ID" value="Atu4175"/>
</dbReference>
<dbReference type="GeneID" id="1136049"/>
<dbReference type="KEGG" id="atu:Atu4175"/>
<dbReference type="PATRIC" id="fig|176299.10.peg.3989"/>
<dbReference type="eggNOG" id="COG2890">
    <property type="taxonomic scope" value="Bacteria"/>
</dbReference>
<dbReference type="HOGENOM" id="CLU_018398_3_1_5"/>
<dbReference type="OrthoDB" id="9800643at2"/>
<dbReference type="PhylomeDB" id="A9CG70"/>
<dbReference type="BioCyc" id="AGRO:ATU4175-MONOMER"/>
<dbReference type="Proteomes" id="UP000000813">
    <property type="component" value="Chromosome linear"/>
</dbReference>
<dbReference type="GO" id="GO:0003676">
    <property type="term" value="F:nucleic acid binding"/>
    <property type="evidence" value="ECO:0007669"/>
    <property type="project" value="InterPro"/>
</dbReference>
<dbReference type="GO" id="GO:0102559">
    <property type="term" value="F:protein-(glutamine-N5) methyltransferase activity"/>
    <property type="evidence" value="ECO:0007669"/>
    <property type="project" value="UniProtKB-EC"/>
</dbReference>
<dbReference type="GO" id="GO:0036009">
    <property type="term" value="F:protein-glutamine N-methyltransferase activity"/>
    <property type="evidence" value="ECO:0007669"/>
    <property type="project" value="UniProtKB-UniRule"/>
</dbReference>
<dbReference type="GO" id="GO:0032259">
    <property type="term" value="P:methylation"/>
    <property type="evidence" value="ECO:0007669"/>
    <property type="project" value="UniProtKB-KW"/>
</dbReference>
<dbReference type="CDD" id="cd02440">
    <property type="entry name" value="AdoMet_MTases"/>
    <property type="match status" value="1"/>
</dbReference>
<dbReference type="Gene3D" id="1.10.8.10">
    <property type="entry name" value="DNA helicase RuvA subunit, C-terminal domain"/>
    <property type="match status" value="1"/>
</dbReference>
<dbReference type="Gene3D" id="3.40.50.150">
    <property type="entry name" value="Vaccinia Virus protein VP39"/>
    <property type="match status" value="1"/>
</dbReference>
<dbReference type="HAMAP" id="MF_02126">
    <property type="entry name" value="RF_methyltr_PrmC"/>
    <property type="match status" value="1"/>
</dbReference>
<dbReference type="InterPro" id="IPR002052">
    <property type="entry name" value="DNA_methylase_N6_adenine_CS"/>
</dbReference>
<dbReference type="InterPro" id="IPR004556">
    <property type="entry name" value="HemK-like"/>
</dbReference>
<dbReference type="InterPro" id="IPR050320">
    <property type="entry name" value="N5-glutamine_MTase"/>
</dbReference>
<dbReference type="InterPro" id="IPR040758">
    <property type="entry name" value="PrmC_N"/>
</dbReference>
<dbReference type="InterPro" id="IPR019874">
    <property type="entry name" value="RF_methyltr_PrmC"/>
</dbReference>
<dbReference type="InterPro" id="IPR029063">
    <property type="entry name" value="SAM-dependent_MTases_sf"/>
</dbReference>
<dbReference type="InterPro" id="IPR007848">
    <property type="entry name" value="Small_mtfrase_dom"/>
</dbReference>
<dbReference type="NCBIfam" id="TIGR00536">
    <property type="entry name" value="hemK_fam"/>
    <property type="match status" value="1"/>
</dbReference>
<dbReference type="NCBIfam" id="TIGR03534">
    <property type="entry name" value="RF_mod_PrmC"/>
    <property type="match status" value="1"/>
</dbReference>
<dbReference type="PANTHER" id="PTHR18895">
    <property type="entry name" value="HEMK METHYLTRANSFERASE"/>
    <property type="match status" value="1"/>
</dbReference>
<dbReference type="PANTHER" id="PTHR18895:SF74">
    <property type="entry name" value="MTRF1L RELEASE FACTOR GLUTAMINE METHYLTRANSFERASE"/>
    <property type="match status" value="1"/>
</dbReference>
<dbReference type="Pfam" id="PF05175">
    <property type="entry name" value="MTS"/>
    <property type="match status" value="1"/>
</dbReference>
<dbReference type="Pfam" id="PF17827">
    <property type="entry name" value="PrmC_N"/>
    <property type="match status" value="1"/>
</dbReference>
<dbReference type="SUPFAM" id="SSF53335">
    <property type="entry name" value="S-adenosyl-L-methionine-dependent methyltransferases"/>
    <property type="match status" value="1"/>
</dbReference>
<sequence>MSGGGDATVSAELIAARKRLQAAGVADPLVDARLLIADVTGFSLTDFVMKPEHPVTQDESARIAAMIERRAEGEPVHRILGHREFHGLDLLLSKETLEPRPDTEVLVDTLLPALKEAVSRKGSARILDLGTGTGAICLALLKECAQASGIGSDISADALETAAKNAARNGLDSRFETIRSNWFEKISGRFDIIVSNPPYIRTDIVATLDPEVRNHDPMAALDGGQDGLAPYRLIAADAGRFLVENGTVGVEIGFDQRLDVSAIFASHGFSLLDAVKDYGGNDRVLTFRR</sequence>
<protein>
    <recommendedName>
        <fullName evidence="1">Release factor glutamine methyltransferase</fullName>
        <shortName evidence="1">RF MTase</shortName>
        <ecNumber evidence="1">2.1.1.297</ecNumber>
    </recommendedName>
    <alternativeName>
        <fullName evidence="1">N5-glutamine methyltransferase PrmC</fullName>
    </alternativeName>
    <alternativeName>
        <fullName evidence="1">Protein-(glutamine-N5) MTase PrmC</fullName>
    </alternativeName>
    <alternativeName>
        <fullName evidence="1">Protein-glutamine N-methyltransferase PrmC</fullName>
    </alternativeName>
</protein>
<proteinExistence type="inferred from homology"/>